<dbReference type="EMBL" id="AC002423">
    <property type="protein sequence ID" value="AAF87152.1"/>
    <property type="status" value="ALT_SEQ"/>
    <property type="molecule type" value="Genomic_DNA"/>
</dbReference>
<dbReference type="EMBL" id="CP002684">
    <property type="protein sequence ID" value="AEE30465.1"/>
    <property type="molecule type" value="Genomic_DNA"/>
</dbReference>
<dbReference type="EMBL" id="BT011934">
    <property type="status" value="NOT_ANNOTATED_CDS"/>
    <property type="molecule type" value="mRNA"/>
</dbReference>
<dbReference type="RefSeq" id="NP_173812.1">
    <property type="nucleotide sequence ID" value="NM_102248.3"/>
</dbReference>
<dbReference type="SMR" id="P0C0B1"/>
<dbReference type="PaxDb" id="3702-AT1G24010.1"/>
<dbReference type="ProteomicsDB" id="242522"/>
<dbReference type="DNASU" id="839013"/>
<dbReference type="EnsemblPlants" id="AT1G24010.1">
    <property type="protein sequence ID" value="AT1G24010.1"/>
    <property type="gene ID" value="AT1G24010"/>
</dbReference>
<dbReference type="GeneID" id="839013"/>
<dbReference type="Gramene" id="AT1G24010.1">
    <property type="protein sequence ID" value="AT1G24010.1"/>
    <property type="gene ID" value="AT1G24010"/>
</dbReference>
<dbReference type="KEGG" id="ath:AT1G24010"/>
<dbReference type="Araport" id="AT1G24010"/>
<dbReference type="TAIR" id="AT1G24010"/>
<dbReference type="HOGENOM" id="CLU_081988_5_0_1"/>
<dbReference type="InParanoid" id="P0C0B1"/>
<dbReference type="OMA" id="ITHVEDN"/>
<dbReference type="OrthoDB" id="1037914at2759"/>
<dbReference type="PhylomeDB" id="P0C0B1"/>
<dbReference type="PRO" id="PR:P0C0B1"/>
<dbReference type="Proteomes" id="UP000006548">
    <property type="component" value="Chromosome 1"/>
</dbReference>
<dbReference type="ExpressionAtlas" id="P0C0B1">
    <property type="expression patterns" value="baseline and differential"/>
</dbReference>
<dbReference type="GO" id="GO:0006952">
    <property type="term" value="P:defense response"/>
    <property type="evidence" value="ECO:0007669"/>
    <property type="project" value="InterPro"/>
</dbReference>
<dbReference type="Gene3D" id="3.30.530.20">
    <property type="match status" value="2"/>
</dbReference>
<dbReference type="InterPro" id="IPR000916">
    <property type="entry name" value="Bet_v_I/MLP"/>
</dbReference>
<dbReference type="InterPro" id="IPR051761">
    <property type="entry name" value="MLP-like_ligand-binding"/>
</dbReference>
<dbReference type="InterPro" id="IPR023393">
    <property type="entry name" value="START-like_dom_sf"/>
</dbReference>
<dbReference type="PANTHER" id="PTHR31907">
    <property type="entry name" value="MLP-LIKE PROTEIN 423"/>
    <property type="match status" value="1"/>
</dbReference>
<dbReference type="Pfam" id="PF00407">
    <property type="entry name" value="Bet_v_1"/>
    <property type="match status" value="1"/>
</dbReference>
<dbReference type="SMART" id="SM01037">
    <property type="entry name" value="Bet_v_1"/>
    <property type="match status" value="1"/>
</dbReference>
<dbReference type="SUPFAM" id="SSF55961">
    <property type="entry name" value="Bet v1-like"/>
    <property type="match status" value="1"/>
</dbReference>
<comment type="sequence caution" evidence="1">
    <conflict type="erroneous gene model prediction">
        <sequence resource="EMBL-CDS" id="AAF87152"/>
    </conflict>
    <text>The predicted gene At1g24000 has been split into 3 genes: At1g24000, At1g24010 and At1g24020.</text>
</comment>
<evidence type="ECO:0000305" key="1"/>
<protein>
    <recommendedName>
        <fullName>Uncharacterized protein At1g24010</fullName>
    </recommendedName>
</protein>
<name>Y1401_ARATH</name>
<accession>P0C0B1</accession>
<accession>Q9LR93</accession>
<keyword id="KW-1185">Reference proteome</keyword>
<gene>
    <name type="ordered locus">At1g24010</name>
    <name type="ORF">T23E23.17</name>
</gene>
<sequence length="141" mass="16477">MTLNGYLSTDFHIKSPAKKFFQTCIETMDLPKDDVTVEIEEVPLEKKKTTFRIEGFQISEWYKSFKGTITPDMATWQNPDGYKKLEGTMTITHVEDNDCDRAILTVKYEKINSDIKDPGTIMDTFVEFFKEMDEYLVEDFN</sequence>
<organism>
    <name type="scientific">Arabidopsis thaliana</name>
    <name type="common">Mouse-ear cress</name>
    <dbReference type="NCBI Taxonomy" id="3702"/>
    <lineage>
        <taxon>Eukaryota</taxon>
        <taxon>Viridiplantae</taxon>
        <taxon>Streptophyta</taxon>
        <taxon>Embryophyta</taxon>
        <taxon>Tracheophyta</taxon>
        <taxon>Spermatophyta</taxon>
        <taxon>Magnoliopsida</taxon>
        <taxon>eudicotyledons</taxon>
        <taxon>Gunneridae</taxon>
        <taxon>Pentapetalae</taxon>
        <taxon>rosids</taxon>
        <taxon>malvids</taxon>
        <taxon>Brassicales</taxon>
        <taxon>Brassicaceae</taxon>
        <taxon>Camelineae</taxon>
        <taxon>Arabidopsis</taxon>
    </lineage>
</organism>
<proteinExistence type="evidence at transcript level"/>
<reference key="1">
    <citation type="journal article" date="2000" name="Nature">
        <title>Sequence and analysis of chromosome 1 of the plant Arabidopsis thaliana.</title>
        <authorList>
            <person name="Theologis A."/>
            <person name="Ecker J.R."/>
            <person name="Palm C.J."/>
            <person name="Federspiel N.A."/>
            <person name="Kaul S."/>
            <person name="White O."/>
            <person name="Alonso J."/>
            <person name="Altafi H."/>
            <person name="Araujo R."/>
            <person name="Bowman C.L."/>
            <person name="Brooks S.Y."/>
            <person name="Buehler E."/>
            <person name="Chan A."/>
            <person name="Chao Q."/>
            <person name="Chen H."/>
            <person name="Cheuk R.F."/>
            <person name="Chin C.W."/>
            <person name="Chung M.K."/>
            <person name="Conn L."/>
            <person name="Conway A.B."/>
            <person name="Conway A.R."/>
            <person name="Creasy T.H."/>
            <person name="Dewar K."/>
            <person name="Dunn P."/>
            <person name="Etgu P."/>
            <person name="Feldblyum T.V."/>
            <person name="Feng J.-D."/>
            <person name="Fong B."/>
            <person name="Fujii C.Y."/>
            <person name="Gill J.E."/>
            <person name="Goldsmith A.D."/>
            <person name="Haas B."/>
            <person name="Hansen N.F."/>
            <person name="Hughes B."/>
            <person name="Huizar L."/>
            <person name="Hunter J.L."/>
            <person name="Jenkins J."/>
            <person name="Johnson-Hopson C."/>
            <person name="Khan S."/>
            <person name="Khaykin E."/>
            <person name="Kim C.J."/>
            <person name="Koo H.L."/>
            <person name="Kremenetskaia I."/>
            <person name="Kurtz D.B."/>
            <person name="Kwan A."/>
            <person name="Lam B."/>
            <person name="Langin-Hooper S."/>
            <person name="Lee A."/>
            <person name="Lee J.M."/>
            <person name="Lenz C.A."/>
            <person name="Li J.H."/>
            <person name="Li Y.-P."/>
            <person name="Lin X."/>
            <person name="Liu S.X."/>
            <person name="Liu Z.A."/>
            <person name="Luros J.S."/>
            <person name="Maiti R."/>
            <person name="Marziali A."/>
            <person name="Militscher J."/>
            <person name="Miranda M."/>
            <person name="Nguyen M."/>
            <person name="Nierman W.C."/>
            <person name="Osborne B.I."/>
            <person name="Pai G."/>
            <person name="Peterson J."/>
            <person name="Pham P.K."/>
            <person name="Rizzo M."/>
            <person name="Rooney T."/>
            <person name="Rowley D."/>
            <person name="Sakano H."/>
            <person name="Salzberg S.L."/>
            <person name="Schwartz J.R."/>
            <person name="Shinn P."/>
            <person name="Southwick A.M."/>
            <person name="Sun H."/>
            <person name="Tallon L.J."/>
            <person name="Tambunga G."/>
            <person name="Toriumi M.J."/>
            <person name="Town C.D."/>
            <person name="Utterback T."/>
            <person name="Van Aken S."/>
            <person name="Vaysberg M."/>
            <person name="Vysotskaia V.S."/>
            <person name="Walker M."/>
            <person name="Wu D."/>
            <person name="Yu G."/>
            <person name="Fraser C.M."/>
            <person name="Venter J.C."/>
            <person name="Davis R.W."/>
        </authorList>
    </citation>
    <scope>NUCLEOTIDE SEQUENCE [LARGE SCALE GENOMIC DNA]</scope>
    <source>
        <strain>cv. Columbia</strain>
    </source>
</reference>
<reference key="2">
    <citation type="journal article" date="2017" name="Plant J.">
        <title>Araport11: a complete reannotation of the Arabidopsis thaliana reference genome.</title>
        <authorList>
            <person name="Cheng C.Y."/>
            <person name="Krishnakumar V."/>
            <person name="Chan A.P."/>
            <person name="Thibaud-Nissen F."/>
            <person name="Schobel S."/>
            <person name="Town C.D."/>
        </authorList>
    </citation>
    <scope>GENOME REANNOTATION</scope>
    <source>
        <strain>cv. Columbia</strain>
    </source>
</reference>
<reference key="3">
    <citation type="submission" date="2004-03" db="EMBL/GenBank/DDBJ databases">
        <authorList>
            <consortium name="Center for eukaryotic structural genomics (CESG)"/>
        </authorList>
    </citation>
    <scope>NUCLEOTIDE SEQUENCE [LARGE SCALE MRNA] OF 2-141</scope>
</reference>
<feature type="chain" id="PRO_0000220595" description="Uncharacterized protein At1g24010">
    <location>
        <begin position="1"/>
        <end position="141"/>
    </location>
</feature>
<feature type="sequence conflict" description="In Ref. 3; BT011934." evidence="1" ref="3">
    <original>D</original>
    <variation>G</variation>
    <location>
        <position position="123"/>
    </location>
</feature>